<feature type="chain" id="PRO_0000337414" description="Elongation factor Tu">
    <location>
        <begin position="1"/>
        <end position="396"/>
    </location>
</feature>
<feature type="domain" description="tr-type G">
    <location>
        <begin position="11"/>
        <end position="205"/>
    </location>
</feature>
<feature type="region of interest" description="G1" evidence="1">
    <location>
        <begin position="20"/>
        <end position="27"/>
    </location>
</feature>
<feature type="region of interest" description="G2" evidence="1">
    <location>
        <begin position="61"/>
        <end position="65"/>
    </location>
</feature>
<feature type="region of interest" description="G3" evidence="1">
    <location>
        <begin position="82"/>
        <end position="85"/>
    </location>
</feature>
<feature type="region of interest" description="G4" evidence="1">
    <location>
        <begin position="137"/>
        <end position="140"/>
    </location>
</feature>
<feature type="region of interest" description="G5" evidence="1">
    <location>
        <begin position="175"/>
        <end position="177"/>
    </location>
</feature>
<feature type="binding site" evidence="2">
    <location>
        <begin position="20"/>
        <end position="27"/>
    </location>
    <ligand>
        <name>GTP</name>
        <dbReference type="ChEBI" id="CHEBI:37565"/>
    </ligand>
</feature>
<feature type="binding site" evidence="2">
    <location>
        <position position="27"/>
    </location>
    <ligand>
        <name>Mg(2+)</name>
        <dbReference type="ChEBI" id="CHEBI:18420"/>
    </ligand>
</feature>
<feature type="binding site" evidence="2">
    <location>
        <begin position="82"/>
        <end position="86"/>
    </location>
    <ligand>
        <name>GTP</name>
        <dbReference type="ChEBI" id="CHEBI:37565"/>
    </ligand>
</feature>
<feature type="binding site" evidence="2">
    <location>
        <begin position="137"/>
        <end position="140"/>
    </location>
    <ligand>
        <name>GTP</name>
        <dbReference type="ChEBI" id="CHEBI:37565"/>
    </ligand>
</feature>
<proteinExistence type="inferred from homology"/>
<name>EFTU_LACDA</name>
<evidence type="ECO:0000250" key="1"/>
<evidence type="ECO:0000255" key="2">
    <source>
        <dbReference type="HAMAP-Rule" id="MF_00118"/>
    </source>
</evidence>
<gene>
    <name evidence="2" type="primary">tuf</name>
    <name type="ordered locus">Ldb0776</name>
</gene>
<sequence length="396" mass="43281">MAEKEHYVRTKPHVNIGTIGHVDHGKTTLTAAITTVLAKKGLAQAEDYSQIDAAPEEKERGITINTAHVEYETEKRHYAHMDAPGHADYIKNMITGAAQMDGAILVVAATDGPMPQTREHILLARQVGVNSIVVFLNKCDLVDDPELIDLVEMEVRDLLSEYGYPGDDVPVVRGSALKALEGDEEAQKKIEELMDVVDEYIPTPERETDKPFLMPVEDVFTITGRGTVASGRIDRGTVKVGDSVEIVGLVEKVLTSVVTGLEMFHKTLDLGEAGDNVGVLLRGVDRDQIVRGQVLAAPGSIKTHKTFKGQVYILSKDEGGRHTPFFSDYRPQFYFHTTDITGEIELPEGTEMVMPGDNTEFSVTLIKPAAIEVGTKFTIREGGRTVGAGQVTEIDD</sequence>
<reference key="1">
    <citation type="journal article" date="2006" name="Proc. Natl. Acad. Sci. U.S.A.">
        <title>The complete genome sequence of Lactobacillus bulgaricus reveals extensive and ongoing reductive evolution.</title>
        <authorList>
            <person name="van de Guchte M."/>
            <person name="Penaud S."/>
            <person name="Grimaldi C."/>
            <person name="Barbe V."/>
            <person name="Bryson K."/>
            <person name="Nicolas P."/>
            <person name="Robert C."/>
            <person name="Oztas S."/>
            <person name="Mangenot S."/>
            <person name="Couloux A."/>
            <person name="Loux V."/>
            <person name="Dervyn R."/>
            <person name="Bossy R."/>
            <person name="Bolotin A."/>
            <person name="Batto J.-M."/>
            <person name="Walunas T."/>
            <person name="Gibrat J.-F."/>
            <person name="Bessieres P."/>
            <person name="Weissenbach J."/>
            <person name="Ehrlich S.D."/>
            <person name="Maguin E."/>
        </authorList>
    </citation>
    <scope>NUCLEOTIDE SEQUENCE [LARGE SCALE GENOMIC DNA]</scope>
    <source>
        <strain>ATCC 11842 / DSM 20081 / BCRC 10696 / JCM 1002 / NBRC 13953 / NCIMB 11778 / NCTC 12712 / WDCM 00102 / Lb 14</strain>
    </source>
</reference>
<dbReference type="EC" id="3.6.5.3" evidence="2"/>
<dbReference type="EMBL" id="CR954253">
    <property type="protein sequence ID" value="CAI97603.1"/>
    <property type="molecule type" value="Genomic_DNA"/>
</dbReference>
<dbReference type="RefSeq" id="WP_003619230.1">
    <property type="nucleotide sequence ID" value="NZ_JQAV01000001.1"/>
</dbReference>
<dbReference type="SMR" id="Q1GAQ0"/>
<dbReference type="STRING" id="390333.Ldb0776"/>
<dbReference type="KEGG" id="ldb:Ldb0776"/>
<dbReference type="PATRIC" id="fig|390333.13.peg.23"/>
<dbReference type="eggNOG" id="COG0050">
    <property type="taxonomic scope" value="Bacteria"/>
</dbReference>
<dbReference type="HOGENOM" id="CLU_007265_0_1_9"/>
<dbReference type="BioCyc" id="LDEL390333:LDB_RS03425-MONOMER"/>
<dbReference type="Proteomes" id="UP000001259">
    <property type="component" value="Chromosome"/>
</dbReference>
<dbReference type="GO" id="GO:0005829">
    <property type="term" value="C:cytosol"/>
    <property type="evidence" value="ECO:0007669"/>
    <property type="project" value="TreeGrafter"/>
</dbReference>
<dbReference type="GO" id="GO:0005525">
    <property type="term" value="F:GTP binding"/>
    <property type="evidence" value="ECO:0007669"/>
    <property type="project" value="UniProtKB-UniRule"/>
</dbReference>
<dbReference type="GO" id="GO:0003924">
    <property type="term" value="F:GTPase activity"/>
    <property type="evidence" value="ECO:0007669"/>
    <property type="project" value="InterPro"/>
</dbReference>
<dbReference type="GO" id="GO:0003746">
    <property type="term" value="F:translation elongation factor activity"/>
    <property type="evidence" value="ECO:0007669"/>
    <property type="project" value="UniProtKB-UniRule"/>
</dbReference>
<dbReference type="CDD" id="cd01884">
    <property type="entry name" value="EF_Tu"/>
    <property type="match status" value="1"/>
</dbReference>
<dbReference type="CDD" id="cd03697">
    <property type="entry name" value="EFTU_II"/>
    <property type="match status" value="1"/>
</dbReference>
<dbReference type="CDD" id="cd03707">
    <property type="entry name" value="EFTU_III"/>
    <property type="match status" value="1"/>
</dbReference>
<dbReference type="FunFam" id="2.40.30.10:FF:000001">
    <property type="entry name" value="Elongation factor Tu"/>
    <property type="match status" value="1"/>
</dbReference>
<dbReference type="FunFam" id="3.40.50.300:FF:000003">
    <property type="entry name" value="Elongation factor Tu"/>
    <property type="match status" value="1"/>
</dbReference>
<dbReference type="Gene3D" id="3.40.50.300">
    <property type="entry name" value="P-loop containing nucleotide triphosphate hydrolases"/>
    <property type="match status" value="1"/>
</dbReference>
<dbReference type="Gene3D" id="2.40.30.10">
    <property type="entry name" value="Translation factors"/>
    <property type="match status" value="2"/>
</dbReference>
<dbReference type="HAMAP" id="MF_00118_B">
    <property type="entry name" value="EF_Tu_B"/>
    <property type="match status" value="1"/>
</dbReference>
<dbReference type="InterPro" id="IPR041709">
    <property type="entry name" value="EF-Tu_GTP-bd"/>
</dbReference>
<dbReference type="InterPro" id="IPR050055">
    <property type="entry name" value="EF-Tu_GTPase"/>
</dbReference>
<dbReference type="InterPro" id="IPR004161">
    <property type="entry name" value="EFTu-like_2"/>
</dbReference>
<dbReference type="InterPro" id="IPR033720">
    <property type="entry name" value="EFTU_2"/>
</dbReference>
<dbReference type="InterPro" id="IPR031157">
    <property type="entry name" value="G_TR_CS"/>
</dbReference>
<dbReference type="InterPro" id="IPR027417">
    <property type="entry name" value="P-loop_NTPase"/>
</dbReference>
<dbReference type="InterPro" id="IPR005225">
    <property type="entry name" value="Small_GTP-bd"/>
</dbReference>
<dbReference type="InterPro" id="IPR000795">
    <property type="entry name" value="T_Tr_GTP-bd_dom"/>
</dbReference>
<dbReference type="InterPro" id="IPR009000">
    <property type="entry name" value="Transl_B-barrel_sf"/>
</dbReference>
<dbReference type="InterPro" id="IPR009001">
    <property type="entry name" value="Transl_elong_EF1A/Init_IF2_C"/>
</dbReference>
<dbReference type="InterPro" id="IPR004541">
    <property type="entry name" value="Transl_elong_EFTu/EF1A_bac/org"/>
</dbReference>
<dbReference type="InterPro" id="IPR004160">
    <property type="entry name" value="Transl_elong_EFTu/EF1A_C"/>
</dbReference>
<dbReference type="NCBIfam" id="TIGR00485">
    <property type="entry name" value="EF-Tu"/>
    <property type="match status" value="1"/>
</dbReference>
<dbReference type="NCBIfam" id="NF000766">
    <property type="entry name" value="PRK00049.1"/>
    <property type="match status" value="1"/>
</dbReference>
<dbReference type="NCBIfam" id="NF009372">
    <property type="entry name" value="PRK12735.1"/>
    <property type="match status" value="1"/>
</dbReference>
<dbReference type="NCBIfam" id="NF009373">
    <property type="entry name" value="PRK12736.1"/>
    <property type="match status" value="1"/>
</dbReference>
<dbReference type="NCBIfam" id="TIGR00231">
    <property type="entry name" value="small_GTP"/>
    <property type="match status" value="1"/>
</dbReference>
<dbReference type="PANTHER" id="PTHR43721:SF22">
    <property type="entry name" value="ELONGATION FACTOR TU, MITOCHONDRIAL"/>
    <property type="match status" value="1"/>
</dbReference>
<dbReference type="PANTHER" id="PTHR43721">
    <property type="entry name" value="ELONGATION FACTOR TU-RELATED"/>
    <property type="match status" value="1"/>
</dbReference>
<dbReference type="Pfam" id="PF00009">
    <property type="entry name" value="GTP_EFTU"/>
    <property type="match status" value="1"/>
</dbReference>
<dbReference type="Pfam" id="PF03144">
    <property type="entry name" value="GTP_EFTU_D2"/>
    <property type="match status" value="1"/>
</dbReference>
<dbReference type="Pfam" id="PF03143">
    <property type="entry name" value="GTP_EFTU_D3"/>
    <property type="match status" value="1"/>
</dbReference>
<dbReference type="PRINTS" id="PR00315">
    <property type="entry name" value="ELONGATNFCT"/>
</dbReference>
<dbReference type="SUPFAM" id="SSF50465">
    <property type="entry name" value="EF-Tu/eEF-1alpha/eIF2-gamma C-terminal domain"/>
    <property type="match status" value="1"/>
</dbReference>
<dbReference type="SUPFAM" id="SSF52540">
    <property type="entry name" value="P-loop containing nucleoside triphosphate hydrolases"/>
    <property type="match status" value="1"/>
</dbReference>
<dbReference type="SUPFAM" id="SSF50447">
    <property type="entry name" value="Translation proteins"/>
    <property type="match status" value="1"/>
</dbReference>
<dbReference type="PROSITE" id="PS00301">
    <property type="entry name" value="G_TR_1"/>
    <property type="match status" value="1"/>
</dbReference>
<dbReference type="PROSITE" id="PS51722">
    <property type="entry name" value="G_TR_2"/>
    <property type="match status" value="1"/>
</dbReference>
<accession>Q1GAQ0</accession>
<protein>
    <recommendedName>
        <fullName evidence="2">Elongation factor Tu</fullName>
        <shortName evidence="2">EF-Tu</shortName>
        <ecNumber evidence="2">3.6.5.3</ecNumber>
    </recommendedName>
</protein>
<keyword id="KW-0963">Cytoplasm</keyword>
<keyword id="KW-0251">Elongation factor</keyword>
<keyword id="KW-0342">GTP-binding</keyword>
<keyword id="KW-0378">Hydrolase</keyword>
<keyword id="KW-0460">Magnesium</keyword>
<keyword id="KW-0479">Metal-binding</keyword>
<keyword id="KW-0547">Nucleotide-binding</keyword>
<keyword id="KW-0648">Protein biosynthesis</keyword>
<keyword id="KW-1185">Reference proteome</keyword>
<comment type="function">
    <text evidence="2">GTP hydrolase that promotes the GTP-dependent binding of aminoacyl-tRNA to the A-site of ribosomes during protein biosynthesis.</text>
</comment>
<comment type="catalytic activity">
    <reaction evidence="2">
        <text>GTP + H2O = GDP + phosphate + H(+)</text>
        <dbReference type="Rhea" id="RHEA:19669"/>
        <dbReference type="ChEBI" id="CHEBI:15377"/>
        <dbReference type="ChEBI" id="CHEBI:15378"/>
        <dbReference type="ChEBI" id="CHEBI:37565"/>
        <dbReference type="ChEBI" id="CHEBI:43474"/>
        <dbReference type="ChEBI" id="CHEBI:58189"/>
        <dbReference type="EC" id="3.6.5.3"/>
    </reaction>
    <physiologicalReaction direction="left-to-right" evidence="2">
        <dbReference type="Rhea" id="RHEA:19670"/>
    </physiologicalReaction>
</comment>
<comment type="subunit">
    <text evidence="2">Monomer.</text>
</comment>
<comment type="subcellular location">
    <subcellularLocation>
        <location evidence="2">Cytoplasm</location>
    </subcellularLocation>
</comment>
<comment type="similarity">
    <text evidence="2">Belongs to the TRAFAC class translation factor GTPase superfamily. Classic translation factor GTPase family. EF-Tu/EF-1A subfamily.</text>
</comment>
<organism>
    <name type="scientific">Lactobacillus delbrueckii subsp. bulgaricus (strain ATCC 11842 / DSM 20081 / BCRC 10696 / JCM 1002 / NBRC 13953 / NCIMB 11778 / NCTC 12712 / WDCM 00102 / Lb 14)</name>
    <dbReference type="NCBI Taxonomy" id="390333"/>
    <lineage>
        <taxon>Bacteria</taxon>
        <taxon>Bacillati</taxon>
        <taxon>Bacillota</taxon>
        <taxon>Bacilli</taxon>
        <taxon>Lactobacillales</taxon>
        <taxon>Lactobacillaceae</taxon>
        <taxon>Lactobacillus</taxon>
    </lineage>
</organism>